<dbReference type="EMBL" id="CP000155">
    <property type="protein sequence ID" value="ABC32861.1"/>
    <property type="molecule type" value="Genomic_DNA"/>
</dbReference>
<dbReference type="RefSeq" id="WP_011399919.1">
    <property type="nucleotide sequence ID" value="NC_007645.1"/>
</dbReference>
<dbReference type="SMR" id="Q2S913"/>
<dbReference type="STRING" id="349521.HCH_06216"/>
<dbReference type="KEGG" id="hch:HCH_06216"/>
<dbReference type="eggNOG" id="COG0088">
    <property type="taxonomic scope" value="Bacteria"/>
</dbReference>
<dbReference type="HOGENOM" id="CLU_041575_5_2_6"/>
<dbReference type="OrthoDB" id="9803201at2"/>
<dbReference type="Proteomes" id="UP000000238">
    <property type="component" value="Chromosome"/>
</dbReference>
<dbReference type="GO" id="GO:1990904">
    <property type="term" value="C:ribonucleoprotein complex"/>
    <property type="evidence" value="ECO:0007669"/>
    <property type="project" value="UniProtKB-KW"/>
</dbReference>
<dbReference type="GO" id="GO:0005840">
    <property type="term" value="C:ribosome"/>
    <property type="evidence" value="ECO:0007669"/>
    <property type="project" value="UniProtKB-KW"/>
</dbReference>
<dbReference type="GO" id="GO:0019843">
    <property type="term" value="F:rRNA binding"/>
    <property type="evidence" value="ECO:0007669"/>
    <property type="project" value="UniProtKB-UniRule"/>
</dbReference>
<dbReference type="GO" id="GO:0003735">
    <property type="term" value="F:structural constituent of ribosome"/>
    <property type="evidence" value="ECO:0007669"/>
    <property type="project" value="InterPro"/>
</dbReference>
<dbReference type="GO" id="GO:0006412">
    <property type="term" value="P:translation"/>
    <property type="evidence" value="ECO:0007669"/>
    <property type="project" value="UniProtKB-UniRule"/>
</dbReference>
<dbReference type="FunFam" id="3.40.1370.10:FF:000001">
    <property type="entry name" value="50S ribosomal protein L4"/>
    <property type="match status" value="1"/>
</dbReference>
<dbReference type="Gene3D" id="3.40.1370.10">
    <property type="match status" value="1"/>
</dbReference>
<dbReference type="HAMAP" id="MF_01328_B">
    <property type="entry name" value="Ribosomal_uL4_B"/>
    <property type="match status" value="1"/>
</dbReference>
<dbReference type="InterPro" id="IPR002136">
    <property type="entry name" value="Ribosomal_uL4"/>
</dbReference>
<dbReference type="InterPro" id="IPR013005">
    <property type="entry name" value="Ribosomal_uL4-like"/>
</dbReference>
<dbReference type="InterPro" id="IPR023574">
    <property type="entry name" value="Ribosomal_uL4_dom_sf"/>
</dbReference>
<dbReference type="NCBIfam" id="TIGR03953">
    <property type="entry name" value="rplD_bact"/>
    <property type="match status" value="1"/>
</dbReference>
<dbReference type="PANTHER" id="PTHR10746">
    <property type="entry name" value="50S RIBOSOMAL PROTEIN L4"/>
    <property type="match status" value="1"/>
</dbReference>
<dbReference type="PANTHER" id="PTHR10746:SF6">
    <property type="entry name" value="LARGE RIBOSOMAL SUBUNIT PROTEIN UL4M"/>
    <property type="match status" value="1"/>
</dbReference>
<dbReference type="Pfam" id="PF00573">
    <property type="entry name" value="Ribosomal_L4"/>
    <property type="match status" value="1"/>
</dbReference>
<dbReference type="SUPFAM" id="SSF52166">
    <property type="entry name" value="Ribosomal protein L4"/>
    <property type="match status" value="1"/>
</dbReference>
<sequence length="202" mass="21802">MELTINGAGKGTVSVSDVAFARDFNEALVHQVVTAYLAGGRQGSKAQKTRSQVSGGGKKPWRQKGSGRARAGTIRSPIWRGGGKTFAATPLDHSQKVNKKMYRAAMQSILSELVRQERLVVVEEMAVEAPKTKQFNAKLKDLGLENVLIVADAVDQNLYLASRNIPHVDVCDAVAINPVSLIAHDKVLVTVSALKKIEEMLG</sequence>
<feature type="chain" id="PRO_0000242382" description="Large ribosomal subunit protein uL4">
    <location>
        <begin position="1"/>
        <end position="202"/>
    </location>
</feature>
<feature type="region of interest" description="Disordered" evidence="2">
    <location>
        <begin position="40"/>
        <end position="71"/>
    </location>
</feature>
<feature type="compositionally biased region" description="Polar residues" evidence="2">
    <location>
        <begin position="44"/>
        <end position="53"/>
    </location>
</feature>
<proteinExistence type="inferred from homology"/>
<comment type="function">
    <text evidence="1">One of the primary rRNA binding proteins, this protein initially binds near the 5'-end of the 23S rRNA. It is important during the early stages of 50S assembly. It makes multiple contacts with different domains of the 23S rRNA in the assembled 50S subunit and ribosome.</text>
</comment>
<comment type="function">
    <text evidence="1">Forms part of the polypeptide exit tunnel.</text>
</comment>
<comment type="subunit">
    <text evidence="1">Part of the 50S ribosomal subunit.</text>
</comment>
<comment type="similarity">
    <text evidence="1">Belongs to the universal ribosomal protein uL4 family.</text>
</comment>
<gene>
    <name evidence="1" type="primary">rplD</name>
    <name type="ordered locus">HCH_06216</name>
</gene>
<accession>Q2S913</accession>
<reference key="1">
    <citation type="journal article" date="2005" name="Nucleic Acids Res.">
        <title>Genomic blueprint of Hahella chejuensis, a marine microbe producing an algicidal agent.</title>
        <authorList>
            <person name="Jeong H."/>
            <person name="Yim J.H."/>
            <person name="Lee C."/>
            <person name="Choi S.-H."/>
            <person name="Park Y.K."/>
            <person name="Yoon S.H."/>
            <person name="Hur C.-G."/>
            <person name="Kang H.-Y."/>
            <person name="Kim D."/>
            <person name="Lee H.H."/>
            <person name="Park K.H."/>
            <person name="Park S.-H."/>
            <person name="Park H.-S."/>
            <person name="Lee H.K."/>
            <person name="Oh T.K."/>
            <person name="Kim J.F."/>
        </authorList>
    </citation>
    <scope>NUCLEOTIDE SEQUENCE [LARGE SCALE GENOMIC DNA]</scope>
    <source>
        <strain>KCTC 2396</strain>
    </source>
</reference>
<evidence type="ECO:0000255" key="1">
    <source>
        <dbReference type="HAMAP-Rule" id="MF_01328"/>
    </source>
</evidence>
<evidence type="ECO:0000256" key="2">
    <source>
        <dbReference type="SAM" id="MobiDB-lite"/>
    </source>
</evidence>
<evidence type="ECO:0000305" key="3"/>
<protein>
    <recommendedName>
        <fullName evidence="1">Large ribosomal subunit protein uL4</fullName>
    </recommendedName>
    <alternativeName>
        <fullName evidence="3">50S ribosomal protein L4</fullName>
    </alternativeName>
</protein>
<name>RL4_HAHCH</name>
<organism>
    <name type="scientific">Hahella chejuensis (strain KCTC 2396)</name>
    <dbReference type="NCBI Taxonomy" id="349521"/>
    <lineage>
        <taxon>Bacteria</taxon>
        <taxon>Pseudomonadati</taxon>
        <taxon>Pseudomonadota</taxon>
        <taxon>Gammaproteobacteria</taxon>
        <taxon>Oceanospirillales</taxon>
        <taxon>Hahellaceae</taxon>
        <taxon>Hahella</taxon>
    </lineage>
</organism>
<keyword id="KW-1185">Reference proteome</keyword>
<keyword id="KW-0687">Ribonucleoprotein</keyword>
<keyword id="KW-0689">Ribosomal protein</keyword>
<keyword id="KW-0694">RNA-binding</keyword>
<keyword id="KW-0699">rRNA-binding</keyword>